<dbReference type="EMBL" id="FM992688">
    <property type="protein sequence ID" value="CAX45217.1"/>
    <property type="molecule type" value="Genomic_DNA"/>
</dbReference>
<dbReference type="RefSeq" id="XP_002417562.1">
    <property type="nucleotide sequence ID" value="XM_002417517.1"/>
</dbReference>
<dbReference type="SMR" id="B9W8Z2"/>
<dbReference type="GeneID" id="8045109"/>
<dbReference type="KEGG" id="cdu:CD36_09180"/>
<dbReference type="CGD" id="CAL0000161574">
    <property type="gene designation" value="Cd36_09180"/>
</dbReference>
<dbReference type="VEuPathDB" id="FungiDB:CD36_09180"/>
<dbReference type="eggNOG" id="ENOG502QW0H">
    <property type="taxonomic scope" value="Eukaryota"/>
</dbReference>
<dbReference type="HOGENOM" id="CLU_066477_0_0_1"/>
<dbReference type="OrthoDB" id="4097053at2759"/>
<dbReference type="Proteomes" id="UP000002605">
    <property type="component" value="Chromosome 1"/>
</dbReference>
<dbReference type="GO" id="GO:0005789">
    <property type="term" value="C:endoplasmic reticulum membrane"/>
    <property type="evidence" value="ECO:0007669"/>
    <property type="project" value="UniProtKB-SubCell"/>
</dbReference>
<dbReference type="GO" id="GO:0043529">
    <property type="term" value="C:GET complex"/>
    <property type="evidence" value="ECO:0007669"/>
    <property type="project" value="UniProtKB-UniRule"/>
</dbReference>
<dbReference type="GO" id="GO:0000139">
    <property type="term" value="C:Golgi membrane"/>
    <property type="evidence" value="ECO:0007669"/>
    <property type="project" value="UniProtKB-SubCell"/>
</dbReference>
<dbReference type="GO" id="GO:0045048">
    <property type="term" value="P:protein insertion into ER membrane"/>
    <property type="evidence" value="ECO:0007669"/>
    <property type="project" value="UniProtKB-UniRule"/>
</dbReference>
<dbReference type="GO" id="GO:0006890">
    <property type="term" value="P:retrograde vesicle-mediated transport, Golgi to endoplasmic reticulum"/>
    <property type="evidence" value="ECO:0007669"/>
    <property type="project" value="TreeGrafter"/>
</dbReference>
<dbReference type="HAMAP" id="MF_03114">
    <property type="entry name" value="Get2"/>
    <property type="match status" value="1"/>
</dbReference>
<dbReference type="InterPro" id="IPR014802">
    <property type="entry name" value="GET2"/>
</dbReference>
<dbReference type="InterPro" id="IPR028143">
    <property type="entry name" value="Get2/sif1"/>
</dbReference>
<dbReference type="PANTHER" id="PTHR28263">
    <property type="entry name" value="GOLGI TO ER TRAFFIC PROTEIN 2"/>
    <property type="match status" value="1"/>
</dbReference>
<dbReference type="PANTHER" id="PTHR28263:SF1">
    <property type="entry name" value="GOLGI TO ER TRAFFIC PROTEIN 2"/>
    <property type="match status" value="1"/>
</dbReference>
<dbReference type="Pfam" id="PF08690">
    <property type="entry name" value="GET2"/>
    <property type="match status" value="1"/>
</dbReference>
<evidence type="ECO:0000255" key="1">
    <source>
        <dbReference type="HAMAP-Rule" id="MF_03114"/>
    </source>
</evidence>
<evidence type="ECO:0000256" key="2">
    <source>
        <dbReference type="SAM" id="MobiDB-lite"/>
    </source>
</evidence>
<accession>B9W8Z2</accession>
<feature type="chain" id="PRO_0000388627" description="Golgi to ER traffic protein 2">
    <location>
        <begin position="1"/>
        <end position="301"/>
    </location>
</feature>
<feature type="topological domain" description="Cytoplasmic" evidence="1">
    <location>
        <begin position="1"/>
        <end position="167"/>
    </location>
</feature>
<feature type="transmembrane region" description="Helical" evidence="1">
    <location>
        <begin position="168"/>
        <end position="188"/>
    </location>
</feature>
<feature type="topological domain" description="Lumenal" evidence="1">
    <location>
        <begin position="189"/>
        <end position="214"/>
    </location>
</feature>
<feature type="transmembrane region" description="Helical" evidence="1">
    <location>
        <begin position="215"/>
        <end position="234"/>
    </location>
</feature>
<feature type="topological domain" description="Cytoplasmic" evidence="1">
    <location>
        <begin position="235"/>
        <end position="278"/>
    </location>
</feature>
<feature type="transmembrane region" description="Helical" evidence="1">
    <location>
        <begin position="279"/>
        <end position="299"/>
    </location>
</feature>
<feature type="topological domain" description="Lumenal" evidence="1">
    <location>
        <begin position="300"/>
        <end position="301"/>
    </location>
</feature>
<feature type="region of interest" description="Disordered" evidence="2">
    <location>
        <begin position="42"/>
        <end position="93"/>
    </location>
</feature>
<feature type="compositionally biased region" description="Low complexity" evidence="2">
    <location>
        <begin position="42"/>
        <end position="55"/>
    </location>
</feature>
<feature type="compositionally biased region" description="Basic and acidic residues" evidence="2">
    <location>
        <begin position="56"/>
        <end position="67"/>
    </location>
</feature>
<protein>
    <recommendedName>
        <fullName evidence="1">Golgi to ER traffic protein 2</fullName>
    </recommendedName>
</protein>
<name>GET2_CANDC</name>
<keyword id="KW-0256">Endoplasmic reticulum</keyword>
<keyword id="KW-0931">ER-Golgi transport</keyword>
<keyword id="KW-0333">Golgi apparatus</keyword>
<keyword id="KW-0472">Membrane</keyword>
<keyword id="KW-0812">Transmembrane</keyword>
<keyword id="KW-1133">Transmembrane helix</keyword>
<keyword id="KW-0813">Transport</keyword>
<proteinExistence type="inferred from homology"/>
<gene>
    <name evidence="1" type="primary">GET2</name>
    <name type="ORF">CD36_09180</name>
</gene>
<organism>
    <name type="scientific">Candida dubliniensis (strain CD36 / ATCC MYA-646 / CBS 7987 / NCPF 3949 / NRRL Y-17841)</name>
    <name type="common">Yeast</name>
    <dbReference type="NCBI Taxonomy" id="573826"/>
    <lineage>
        <taxon>Eukaryota</taxon>
        <taxon>Fungi</taxon>
        <taxon>Dikarya</taxon>
        <taxon>Ascomycota</taxon>
        <taxon>Saccharomycotina</taxon>
        <taxon>Pichiomycetes</taxon>
        <taxon>Debaryomycetaceae</taxon>
        <taxon>Candida/Lodderomyces clade</taxon>
        <taxon>Candida</taxon>
    </lineage>
</organism>
<comment type="function">
    <text evidence="1">Required for the post-translational delivery of tail-anchored (TA) proteins to the endoplasmic reticulum. Together with GET1, acts as a membrane receptor for soluble GET3, which recognizes and selectively binds the transmembrane domain of TA proteins in the cytosol. The GET complex cooperates with the HDEL receptor ERD2 to mediate the ATP-dependent retrieval of resident ER proteins that contain a C-terminal H-D-E-L retention signal from the Golgi to the ER.</text>
</comment>
<comment type="subunit">
    <text evidence="1">Component of the Golgi to ER traffic (GET) complex, which is composed of GET1, GET2 and GET3. Within the complex, GET1 and GET2 form a heterotetramer which is stabilized by phosphatidylinositol binding and which binds to the GET3 homodimer.</text>
</comment>
<comment type="subcellular location">
    <subcellularLocation>
        <location evidence="1">Endoplasmic reticulum membrane</location>
        <topology evidence="1">Multi-pass membrane protein</topology>
    </subcellularLocation>
    <subcellularLocation>
        <location evidence="1">Golgi apparatus membrane</location>
        <topology evidence="1">Multi-pass membrane protein</topology>
    </subcellularLocation>
</comment>
<comment type="similarity">
    <text evidence="1">Belongs to the GET2 family.</text>
</comment>
<sequence>MSEPVVDTAELSAEEKKRLLRERRQAKMSKGKATARLNNILSQGSSVKTSGVKSVLDQEKEATSSHDDDPEIQDITEITTPPPRTPPIGEDAPQDIDKIFQTMLQQQQQRGQGANTADDPFAQIMKMFNQTEGPDSLINEGSASTQDPTEIKYHQELLEYNTYNQKLWKFRFLLVRVLVTLFNFFYHYTSISDFHASNYAYVRDLSSEEYPVRDFFTWFATSEVVLVAAYYSVFHSLGLFHAANQNSIILKVMSMGSMILPQLESYKPLVARFLGYYELLGIVLGGLSLVIVLFGLLSFAN</sequence>
<reference key="1">
    <citation type="journal article" date="2009" name="Genome Res.">
        <title>Comparative genomics of the fungal pathogens Candida dubliniensis and Candida albicans.</title>
        <authorList>
            <person name="Jackson A.P."/>
            <person name="Gamble J.A."/>
            <person name="Yeomans T."/>
            <person name="Moran G.P."/>
            <person name="Saunders D."/>
            <person name="Harris D."/>
            <person name="Aslett M."/>
            <person name="Barrell J.F."/>
            <person name="Butler G."/>
            <person name="Citiulo F."/>
            <person name="Coleman D.C."/>
            <person name="de Groot P.W.J."/>
            <person name="Goodwin T.J."/>
            <person name="Quail M.A."/>
            <person name="McQuillan J."/>
            <person name="Munro C.A."/>
            <person name="Pain A."/>
            <person name="Poulter R.T."/>
            <person name="Rajandream M.A."/>
            <person name="Renauld H."/>
            <person name="Spiering M.J."/>
            <person name="Tivey A."/>
            <person name="Gow N.A.R."/>
            <person name="Barrell B."/>
            <person name="Sullivan D.J."/>
            <person name="Berriman M."/>
        </authorList>
    </citation>
    <scope>NUCLEOTIDE SEQUENCE [LARGE SCALE GENOMIC DNA]</scope>
    <source>
        <strain>CD36 / ATCC MYA-646 / CBS 7987 / NCPF 3949 / NRRL Y-17841</strain>
    </source>
</reference>